<organism>
    <name type="scientific">Komagataella pastoris</name>
    <name type="common">Yeast</name>
    <name type="synonym">Pichia pastoris</name>
    <dbReference type="NCBI Taxonomy" id="4922"/>
    <lineage>
        <taxon>Eukaryota</taxon>
        <taxon>Fungi</taxon>
        <taxon>Dikarya</taxon>
        <taxon>Ascomycota</taxon>
        <taxon>Saccharomycotina</taxon>
        <taxon>Pichiomycetes</taxon>
        <taxon>Pichiales</taxon>
        <taxon>Pichiaceae</taxon>
        <taxon>Komagataella</taxon>
    </lineage>
</organism>
<feature type="chain" id="PRO_0000204700" description="Acyl-coenzyme A oxidase">
    <location>
        <begin position="1"/>
        <end position="719"/>
    </location>
</feature>
<feature type="short sequence motif" description="Microbody targeting signal">
    <location>
        <begin position="716"/>
        <end position="719"/>
    </location>
</feature>
<accession>Q9Y7B1</accession>
<name>ACOX_PICPA</name>
<evidence type="ECO:0000250" key="1"/>
<evidence type="ECO:0000269" key="2">
    <source>
    </source>
</evidence>
<evidence type="ECO:0000305" key="3"/>
<protein>
    <recommendedName>
        <fullName>Acyl-coenzyme A oxidase</fullName>
        <shortName>Acyl-CoA oxidase</shortName>
        <ecNumber>1.3.3.6</ecNumber>
    </recommendedName>
</protein>
<sequence>MFKIESIKSQSPQVAIDKERKATKFDINKMFEFLESGKDEAALTKSLMQQIERDTILKTNASYYDLTKDQHRELTAQKIARLASYIEKDAPFFENFQKRLNLIAIVDPQLGTRVGVHLGLFLSAIRGNGTEEQFKYWAFERGAAYLKDVYGCFGMTELAHGSNVAGLETTATFDQKTKEFEINTPHLGATKWWIGGAAHSANHCVVYARLIVSGKDYGVKTFVVPIRDRNHNLHSGVAIGDIGAKMGRDGIDNGWIQLTNVRIPMNYMRSKFTKVTQRQEIVEVPPLEQLAYGALLGGRVTMVTDSFRMAQRFITIALRYSVGRRQFGAKNSSEELKLIDYPLHQRRLLPYLALTYALSISSFDLSQTYDSVLSNLDAAGKSQDFSKLGQAIAGLKNLFCASASLKSTATWYVAQLIDECRQACGGHGYSSYSGFGKAYNDWVVQCTWEGDNNILASNAGRLLCNLLSSCKKKEKKIKGDLSYLNGISNIDKEAICWNKQSMTNLSNSNIDKELFCFNKQVCTVKLINAIQGTIIRLGVRVPNIGSKKSTWDDIAAQRVVLSKLNAVLYMLQHLVLKIKQLGDEEAHKQYLVQIAALFATSQIEMNFASYFLQFKAIDSLEPVADVVSELCLSVRDQVIGLTDSFQFSDYFINSALGSHSGDIYNTYFDTVNNLNNPQVRDGKAAYSEALEAMLRRDPLEVRECFEKSDKVLKKLAPKI</sequence>
<proteinExistence type="inferred from homology"/>
<reference key="1">
    <citation type="journal article" date="1999" name="Yeast">
        <title>Analysis of the peroxisomal acyl-CoA oxidase gene product from Pichia pastoris and determination of its targeting signal.</title>
        <authorList>
            <person name="Koller A."/>
            <person name="Spong A.P."/>
            <person name="Luers G.H."/>
            <person name="Subramani S."/>
        </authorList>
    </citation>
    <scope>NUCLEOTIDE SEQUENCE [GENOMIC DNA]</scope>
    <scope>SUBCELLULAR LOCATION</scope>
    <scope>TARGETING SIGNAL</scope>
</reference>
<dbReference type="EC" id="1.3.3.6"/>
<dbReference type="EMBL" id="AF133102">
    <property type="protein sequence ID" value="AAD31029.1"/>
    <property type="molecule type" value="Genomic_DNA"/>
</dbReference>
<dbReference type="SMR" id="Q9Y7B1"/>
<dbReference type="UniPathway" id="UPA00661"/>
<dbReference type="GO" id="GO:0005777">
    <property type="term" value="C:peroxisome"/>
    <property type="evidence" value="ECO:0007669"/>
    <property type="project" value="UniProtKB-SubCell"/>
</dbReference>
<dbReference type="GO" id="GO:0003997">
    <property type="term" value="F:acyl-CoA oxidase activity"/>
    <property type="evidence" value="ECO:0007669"/>
    <property type="project" value="UniProtKB-EC"/>
</dbReference>
<dbReference type="GO" id="GO:0071949">
    <property type="term" value="F:FAD binding"/>
    <property type="evidence" value="ECO:0007669"/>
    <property type="project" value="InterPro"/>
</dbReference>
<dbReference type="GO" id="GO:0005504">
    <property type="term" value="F:fatty acid binding"/>
    <property type="evidence" value="ECO:0007669"/>
    <property type="project" value="TreeGrafter"/>
</dbReference>
<dbReference type="GO" id="GO:0033540">
    <property type="term" value="P:fatty acid beta-oxidation using acyl-CoA oxidase"/>
    <property type="evidence" value="ECO:0007669"/>
    <property type="project" value="UniProtKB-UniPathway"/>
</dbReference>
<dbReference type="GO" id="GO:0055088">
    <property type="term" value="P:lipid homeostasis"/>
    <property type="evidence" value="ECO:0007669"/>
    <property type="project" value="TreeGrafter"/>
</dbReference>
<dbReference type="FunFam" id="1.10.540.10:FF:000018">
    <property type="entry name" value="Acyl-coenzyme A oxidase"/>
    <property type="match status" value="1"/>
</dbReference>
<dbReference type="FunFam" id="1.20.140.10:FF:000015">
    <property type="entry name" value="Acyl-coenzyme A oxidase"/>
    <property type="match status" value="1"/>
</dbReference>
<dbReference type="FunFam" id="2.40.110.10:FF:000003">
    <property type="entry name" value="Acyl-coenzyme A oxidase"/>
    <property type="match status" value="1"/>
</dbReference>
<dbReference type="Gene3D" id="1.10.540.10">
    <property type="entry name" value="Acyl-CoA dehydrogenase/oxidase, N-terminal domain"/>
    <property type="match status" value="1"/>
</dbReference>
<dbReference type="Gene3D" id="2.40.110.10">
    <property type="entry name" value="Butyryl-CoA Dehydrogenase, subunit A, domain 2"/>
    <property type="match status" value="1"/>
</dbReference>
<dbReference type="Gene3D" id="1.20.140.10">
    <property type="entry name" value="Butyryl-CoA Dehydrogenase, subunit A, domain 3"/>
    <property type="match status" value="2"/>
</dbReference>
<dbReference type="InterPro" id="IPR055060">
    <property type="entry name" value="ACOX_C_alpha1"/>
</dbReference>
<dbReference type="InterPro" id="IPR029320">
    <property type="entry name" value="Acyl-CoA_ox_N"/>
</dbReference>
<dbReference type="InterPro" id="IPR006091">
    <property type="entry name" value="Acyl-CoA_Oxase/DH_mid-dom"/>
</dbReference>
<dbReference type="InterPro" id="IPR046373">
    <property type="entry name" value="Acyl-CoA_Oxase/DH_mid-dom_sf"/>
</dbReference>
<dbReference type="InterPro" id="IPR012258">
    <property type="entry name" value="Acyl-CoA_oxidase"/>
</dbReference>
<dbReference type="InterPro" id="IPR002655">
    <property type="entry name" value="Acyl-CoA_oxidase_C"/>
</dbReference>
<dbReference type="InterPro" id="IPR036250">
    <property type="entry name" value="AcylCo_DH-like_C"/>
</dbReference>
<dbReference type="InterPro" id="IPR037069">
    <property type="entry name" value="AcylCoA_DH/ox_N_sf"/>
</dbReference>
<dbReference type="InterPro" id="IPR009100">
    <property type="entry name" value="AcylCoA_DH/oxidase_NM_dom_sf"/>
</dbReference>
<dbReference type="PANTHER" id="PTHR10909:SF352">
    <property type="entry name" value="ACYL-COENZYME A OXIDASE-LIKE PROTEIN"/>
    <property type="match status" value="1"/>
</dbReference>
<dbReference type="PANTHER" id="PTHR10909">
    <property type="entry name" value="ELECTRON TRANSPORT OXIDOREDUCTASE"/>
    <property type="match status" value="1"/>
</dbReference>
<dbReference type="Pfam" id="PF01756">
    <property type="entry name" value="ACOX"/>
    <property type="match status" value="1"/>
</dbReference>
<dbReference type="Pfam" id="PF22924">
    <property type="entry name" value="ACOX_C_alpha1"/>
    <property type="match status" value="1"/>
</dbReference>
<dbReference type="Pfam" id="PF02770">
    <property type="entry name" value="Acyl-CoA_dh_M"/>
    <property type="match status" value="1"/>
</dbReference>
<dbReference type="Pfam" id="PF14749">
    <property type="entry name" value="Acyl-CoA_ox_N"/>
    <property type="match status" value="1"/>
</dbReference>
<dbReference type="PIRSF" id="PIRSF000168">
    <property type="entry name" value="Acyl-CoA_oxidase"/>
    <property type="match status" value="1"/>
</dbReference>
<dbReference type="SUPFAM" id="SSF47203">
    <property type="entry name" value="Acyl-CoA dehydrogenase C-terminal domain-like"/>
    <property type="match status" value="2"/>
</dbReference>
<dbReference type="SUPFAM" id="SSF56645">
    <property type="entry name" value="Acyl-CoA dehydrogenase NM domain-like"/>
    <property type="match status" value="1"/>
</dbReference>
<comment type="catalytic activity">
    <reaction>
        <text>a 2,3-saturated acyl-CoA + O2 = a (2E)-enoyl-CoA + H2O2</text>
        <dbReference type="Rhea" id="RHEA:38959"/>
        <dbReference type="ChEBI" id="CHEBI:15379"/>
        <dbReference type="ChEBI" id="CHEBI:16240"/>
        <dbReference type="ChEBI" id="CHEBI:58856"/>
        <dbReference type="ChEBI" id="CHEBI:65111"/>
        <dbReference type="EC" id="1.3.3.6"/>
    </reaction>
</comment>
<comment type="cofactor">
    <cofactor evidence="1">
        <name>FAD</name>
        <dbReference type="ChEBI" id="CHEBI:57692"/>
    </cofactor>
</comment>
<comment type="pathway">
    <text>Lipid metabolism; peroxisomal fatty acid beta-oxidation.</text>
</comment>
<comment type="subcellular location">
    <subcellularLocation>
        <location evidence="2">Peroxisome</location>
    </subcellularLocation>
</comment>
<comment type="similarity">
    <text evidence="3">Belongs to the acyl-CoA oxidase family.</text>
</comment>
<keyword id="KW-0274">FAD</keyword>
<keyword id="KW-0276">Fatty acid metabolism</keyword>
<keyword id="KW-0285">Flavoprotein</keyword>
<keyword id="KW-0443">Lipid metabolism</keyword>
<keyword id="KW-0560">Oxidoreductase</keyword>
<keyword id="KW-0576">Peroxisome</keyword>
<gene>
    <name type="primary">POX1</name>
</gene>